<proteinExistence type="evidence at transcript level"/>
<keyword id="KW-0131">Cell cycle</keyword>
<keyword id="KW-0132">Cell division</keyword>
<keyword id="KW-0137">Centromere</keyword>
<keyword id="KW-0158">Chromosome</keyword>
<keyword id="KW-0175">Coiled coil</keyword>
<keyword id="KW-0995">Kinetochore</keyword>
<keyword id="KW-0498">Mitosis</keyword>
<keyword id="KW-1185">Reference proteome</keyword>
<dbReference type="EMBL" id="BC135038">
    <property type="protein sequence ID" value="AAI35039.1"/>
    <property type="status" value="ALT_SEQ"/>
    <property type="molecule type" value="mRNA"/>
</dbReference>
<dbReference type="EMBL" id="BC152508">
    <property type="protein sequence ID" value="AAI52509.1"/>
    <property type="molecule type" value="mRNA"/>
</dbReference>
<dbReference type="RefSeq" id="NP_001098412.1">
    <property type="nucleotide sequence ID" value="NM_001104942.1"/>
</dbReference>
<dbReference type="SMR" id="A7MD70"/>
<dbReference type="BioGRID" id="294366">
    <property type="interactions" value="1"/>
</dbReference>
<dbReference type="FunCoup" id="A7MD70">
    <property type="interactions" value="589"/>
</dbReference>
<dbReference type="STRING" id="7955.ENSDARP00000132249"/>
<dbReference type="PaxDb" id="7955-ENSDARP00000098483"/>
<dbReference type="PeptideAtlas" id="A7MD70"/>
<dbReference type="GeneID" id="568360"/>
<dbReference type="KEGG" id="dre:568360"/>
<dbReference type="AGR" id="ZFIN:ZDB-GENE-070928-7"/>
<dbReference type="CTD" id="54908"/>
<dbReference type="ZFIN" id="ZDB-GENE-070928-7">
    <property type="gene designation" value="spdl1"/>
</dbReference>
<dbReference type="eggNOG" id="ENOG502S27G">
    <property type="taxonomic scope" value="Eukaryota"/>
</dbReference>
<dbReference type="InParanoid" id="A7MD70"/>
<dbReference type="OrthoDB" id="2121607at2759"/>
<dbReference type="PhylomeDB" id="A7MD70"/>
<dbReference type="PRO" id="PR:A7MD70"/>
<dbReference type="Proteomes" id="UP000000437">
    <property type="component" value="Alternate scaffold 14"/>
</dbReference>
<dbReference type="Proteomes" id="UP000000437">
    <property type="component" value="Chromosome 14"/>
</dbReference>
<dbReference type="GO" id="GO:0005634">
    <property type="term" value="C:nucleus"/>
    <property type="evidence" value="ECO:0000250"/>
    <property type="project" value="UniProtKB"/>
</dbReference>
<dbReference type="GO" id="GO:0000940">
    <property type="term" value="C:outer kinetochore"/>
    <property type="evidence" value="ECO:0000250"/>
    <property type="project" value="UniProtKB"/>
</dbReference>
<dbReference type="GO" id="GO:0000922">
    <property type="term" value="C:spindle pole"/>
    <property type="evidence" value="ECO:0000250"/>
    <property type="project" value="UniProtKB"/>
</dbReference>
<dbReference type="GO" id="GO:0043515">
    <property type="term" value="F:kinetochore binding"/>
    <property type="evidence" value="ECO:0000250"/>
    <property type="project" value="UniProtKB"/>
</dbReference>
<dbReference type="GO" id="GO:0051301">
    <property type="term" value="P:cell division"/>
    <property type="evidence" value="ECO:0007669"/>
    <property type="project" value="UniProtKB-KW"/>
</dbReference>
<dbReference type="GO" id="GO:0000132">
    <property type="term" value="P:establishment of mitotic spindle orientation"/>
    <property type="evidence" value="ECO:0000250"/>
    <property type="project" value="UniProtKB"/>
</dbReference>
<dbReference type="GO" id="GO:0007080">
    <property type="term" value="P:mitotic metaphase chromosome alignment"/>
    <property type="evidence" value="ECO:0000250"/>
    <property type="project" value="UniProtKB"/>
</dbReference>
<dbReference type="GO" id="GO:0007094">
    <property type="term" value="P:mitotic spindle assembly checkpoint signaling"/>
    <property type="evidence" value="ECO:0007669"/>
    <property type="project" value="InterPro"/>
</dbReference>
<dbReference type="GO" id="GO:0034501">
    <property type="term" value="P:protein localization to kinetochore"/>
    <property type="evidence" value="ECO:0000250"/>
    <property type="project" value="UniProtKB"/>
</dbReference>
<dbReference type="HAMAP" id="MF_03041">
    <property type="entry name" value="SPDLY"/>
    <property type="match status" value="1"/>
</dbReference>
<dbReference type="InterPro" id="IPR028593">
    <property type="entry name" value="SPDLY_chordates"/>
</dbReference>
<dbReference type="InterPro" id="IPR051149">
    <property type="entry name" value="Spindly/BICDR_Dynein_Adapter"/>
</dbReference>
<dbReference type="PANTHER" id="PTHR32123">
    <property type="entry name" value="BICD FAMILY-LIKE CARGO ADAPTER"/>
    <property type="match status" value="1"/>
</dbReference>
<dbReference type="PANTHER" id="PTHR32123:SF9">
    <property type="entry name" value="PROTEIN SPINDLY"/>
    <property type="match status" value="1"/>
</dbReference>
<accession>A7MD70</accession>
<accession>A4IGD1</accession>
<organism>
    <name type="scientific">Danio rerio</name>
    <name type="common">Zebrafish</name>
    <name type="synonym">Brachydanio rerio</name>
    <dbReference type="NCBI Taxonomy" id="7955"/>
    <lineage>
        <taxon>Eukaryota</taxon>
        <taxon>Metazoa</taxon>
        <taxon>Chordata</taxon>
        <taxon>Craniata</taxon>
        <taxon>Vertebrata</taxon>
        <taxon>Euteleostomi</taxon>
        <taxon>Actinopterygii</taxon>
        <taxon>Neopterygii</taxon>
        <taxon>Teleostei</taxon>
        <taxon>Ostariophysi</taxon>
        <taxon>Cypriniformes</taxon>
        <taxon>Danionidae</taxon>
        <taxon>Danioninae</taxon>
        <taxon>Danio</taxon>
    </lineage>
</organism>
<gene>
    <name type="primary">spdl1</name>
    <name type="synonym">ccdc99</name>
    <name type="ORF">zgc:171223</name>
</gene>
<evidence type="ECO:0000250" key="1">
    <source>
        <dbReference type="UniProtKB" id="Q96EA4"/>
    </source>
</evidence>
<evidence type="ECO:0000255" key="2">
    <source>
        <dbReference type="HAMAP-Rule" id="MF_03041"/>
    </source>
</evidence>
<evidence type="ECO:0000256" key="3">
    <source>
        <dbReference type="SAM" id="MobiDB-lite"/>
    </source>
</evidence>
<evidence type="ECO:0000305" key="4"/>
<sequence>MSDLEDEIKVLRRKVQDGEEALQRAGQYGLQLLDEKMELHNRLEEQRTEMSNVIEALEQDKYTLQREVELKIRMLESLRSEFDLVRTQQKHQMEQQQTLLERNHAVEISDLKNKVVKMKTDLEEAQLAEKQMRHKLDQQAEALNSKTEELRALTERAHETMSSEILELQVQKMELESAMATLEQELQEAQYKDEQLHLANTTLQRQLERLTEEKEEREKEAVSCYNALEKAREANQDLQIQLEQVLQQAQDPNSKGNSLFSEVEDKRAAMERQLNSMKRNYDSLQKQHVLTKQHMHHMKMQIATLMQLQGNRADPAQLERLQFMLSDKNKEIESLMMKVRELEKEKMAVKDHHPHPPSNEGELKDETYYTDLLKMQLANSKKDAEKLKEELSMARMKALSESQRVLELERKLYGTEQALKLRHSDNMKLQVKLEELKIKYTPNEVNKAQVQKRRREKFPVPEENSASVKDETTTQDTELSKNSNEKAEEKTPSHPVEKPVVIPLQSEHPTEPNPVLSRESKSVRICEDPPVCIPDAPRSPVNDSNSKNVDQTHQSSEEEENWRTEKKRKKYQQPTHVSSQKTMANECAQQ</sequence>
<reference key="1">
    <citation type="submission" date="2007-08" db="EMBL/GenBank/DDBJ databases">
        <authorList>
            <consortium name="NIH - Zebrafish Gene Collection (ZGC) project"/>
        </authorList>
    </citation>
    <scope>NUCLEOTIDE SEQUENCE [LARGE SCALE MRNA]</scope>
    <source>
        <tissue>Embryo</tissue>
    </source>
</reference>
<feature type="chain" id="PRO_0000383342" description="Protein Spindly">
    <location>
        <begin position="1"/>
        <end position="590"/>
    </location>
</feature>
<feature type="region of interest" description="Disordered" evidence="3">
    <location>
        <begin position="446"/>
        <end position="590"/>
    </location>
</feature>
<feature type="coiled-coil region" evidence="2">
    <location>
        <begin position="1"/>
        <end position="401"/>
    </location>
</feature>
<feature type="compositionally biased region" description="Basic and acidic residues" evidence="3">
    <location>
        <begin position="483"/>
        <end position="497"/>
    </location>
</feature>
<feature type="compositionally biased region" description="Basic and acidic residues" evidence="3">
    <location>
        <begin position="518"/>
        <end position="527"/>
    </location>
</feature>
<feature type="compositionally biased region" description="Polar residues" evidence="3">
    <location>
        <begin position="541"/>
        <end position="554"/>
    </location>
</feature>
<feature type="compositionally biased region" description="Polar residues" evidence="3">
    <location>
        <begin position="572"/>
        <end position="590"/>
    </location>
</feature>
<protein>
    <recommendedName>
        <fullName evidence="2">Protein Spindly</fullName>
    </recommendedName>
    <alternativeName>
        <fullName evidence="2">Coiled-coil domain-containing protein 99</fullName>
    </alternativeName>
    <alternativeName>
        <fullName evidence="2">Spindle apparatus coiled-coil domain-containing protein 1</fullName>
    </alternativeName>
</protein>
<comment type="function">
    <text evidence="1 2">Required for the localization of dynein and dynactin to the mitotic kintochore. Dynein is believed to control the initial lateral interaction between the kinetochore and spindle microtubules and to facilitate the subsequent formation of end-on kinetochore-microtubule attachments mediated by the NDC80 complex. May act as an adapter protein linking the dynein motor complex to various cargos (By similarity).</text>
</comment>
<comment type="subcellular location">
    <subcellularLocation>
        <location evidence="2">Chromosome</location>
        <location evidence="2">Centromere</location>
        <location evidence="2">Kinetochore</location>
    </subcellularLocation>
</comment>
<comment type="similarity">
    <text evidence="2">Belongs to the Spindly family.</text>
</comment>
<comment type="sequence caution" evidence="4">
    <conflict type="miscellaneous discrepancy">
        <sequence resource="EMBL-CDS" id="AAI35039"/>
    </conflict>
    <text>Contaminating sequence. Potential poly-A sequence.</text>
</comment>
<name>SPDLY_DANRE</name>